<comment type="function">
    <text evidence="1">Produces ATP from ADP in the presence of a proton gradient across the membrane. The V-type alpha chain is a catalytic subunit.</text>
</comment>
<comment type="catalytic activity">
    <reaction evidence="1">
        <text>ATP + H2O + 4 H(+)(in) = ADP + phosphate + 5 H(+)(out)</text>
        <dbReference type="Rhea" id="RHEA:57720"/>
        <dbReference type="ChEBI" id="CHEBI:15377"/>
        <dbReference type="ChEBI" id="CHEBI:15378"/>
        <dbReference type="ChEBI" id="CHEBI:30616"/>
        <dbReference type="ChEBI" id="CHEBI:43474"/>
        <dbReference type="ChEBI" id="CHEBI:456216"/>
        <dbReference type="EC" id="7.1.2.2"/>
    </reaction>
</comment>
<comment type="similarity">
    <text evidence="1">Belongs to the ATPase alpha/beta chains family.</text>
</comment>
<reference key="1">
    <citation type="journal article" date="2006" name="Nat. Genet.">
        <title>The multidrug-resistant human pathogen Clostridium difficile has a highly mobile, mosaic genome.</title>
        <authorList>
            <person name="Sebaihia M."/>
            <person name="Wren B.W."/>
            <person name="Mullany P."/>
            <person name="Fairweather N.F."/>
            <person name="Minton N."/>
            <person name="Stabler R."/>
            <person name="Thomson N.R."/>
            <person name="Roberts A.P."/>
            <person name="Cerdeno-Tarraga A.M."/>
            <person name="Wang H."/>
            <person name="Holden M.T.G."/>
            <person name="Wright A."/>
            <person name="Churcher C."/>
            <person name="Quail M.A."/>
            <person name="Baker S."/>
            <person name="Bason N."/>
            <person name="Brooks K."/>
            <person name="Chillingworth T."/>
            <person name="Cronin A."/>
            <person name="Davis P."/>
            <person name="Dowd L."/>
            <person name="Fraser A."/>
            <person name="Feltwell T."/>
            <person name="Hance Z."/>
            <person name="Holroyd S."/>
            <person name="Jagels K."/>
            <person name="Moule S."/>
            <person name="Mungall K."/>
            <person name="Price C."/>
            <person name="Rabbinowitsch E."/>
            <person name="Sharp S."/>
            <person name="Simmonds M."/>
            <person name="Stevens K."/>
            <person name="Unwin L."/>
            <person name="Whithead S."/>
            <person name="Dupuy B."/>
            <person name="Dougan G."/>
            <person name="Barrell B."/>
            <person name="Parkhill J."/>
        </authorList>
    </citation>
    <scope>NUCLEOTIDE SEQUENCE [LARGE SCALE GENOMIC DNA]</scope>
    <source>
        <strain>630</strain>
    </source>
</reference>
<dbReference type="EC" id="7.1.2.2" evidence="1"/>
<dbReference type="EMBL" id="AM180355">
    <property type="protein sequence ID" value="CAJ69848.1"/>
    <property type="molecule type" value="Genomic_DNA"/>
</dbReference>
<dbReference type="RefSeq" id="WP_003426762.1">
    <property type="nucleotide sequence ID" value="NZ_JAUPES010000017.1"/>
</dbReference>
<dbReference type="RefSeq" id="YP_001089472.1">
    <property type="nucleotide sequence ID" value="NC_009089.1"/>
</dbReference>
<dbReference type="SMR" id="Q184E7"/>
<dbReference type="STRING" id="272563.CD630_29560"/>
<dbReference type="EnsemblBacteria" id="CAJ69848">
    <property type="protein sequence ID" value="CAJ69848"/>
    <property type="gene ID" value="CD630_29560"/>
</dbReference>
<dbReference type="KEGG" id="cdf:CD630_29560"/>
<dbReference type="KEGG" id="pdc:CDIF630_03239"/>
<dbReference type="PATRIC" id="fig|272563.120.peg.3122"/>
<dbReference type="eggNOG" id="COG1155">
    <property type="taxonomic scope" value="Bacteria"/>
</dbReference>
<dbReference type="OrthoDB" id="9803053at2"/>
<dbReference type="PhylomeDB" id="Q184E7"/>
<dbReference type="BioCyc" id="PDIF272563:G12WB-3120-MONOMER"/>
<dbReference type="Proteomes" id="UP000001978">
    <property type="component" value="Chromosome"/>
</dbReference>
<dbReference type="GO" id="GO:0045259">
    <property type="term" value="C:proton-transporting ATP synthase complex"/>
    <property type="evidence" value="ECO:0007669"/>
    <property type="project" value="UniProtKB-ARBA"/>
</dbReference>
<dbReference type="GO" id="GO:0005524">
    <property type="term" value="F:ATP binding"/>
    <property type="evidence" value="ECO:0007669"/>
    <property type="project" value="UniProtKB-UniRule"/>
</dbReference>
<dbReference type="GO" id="GO:0016887">
    <property type="term" value="F:ATP hydrolysis activity"/>
    <property type="evidence" value="ECO:0007669"/>
    <property type="project" value="InterPro"/>
</dbReference>
<dbReference type="GO" id="GO:0046933">
    <property type="term" value="F:proton-transporting ATP synthase activity, rotational mechanism"/>
    <property type="evidence" value="ECO:0007669"/>
    <property type="project" value="UniProtKB-UniRule"/>
</dbReference>
<dbReference type="GO" id="GO:0046961">
    <property type="term" value="F:proton-transporting ATPase activity, rotational mechanism"/>
    <property type="evidence" value="ECO:0007669"/>
    <property type="project" value="InterPro"/>
</dbReference>
<dbReference type="GO" id="GO:0042777">
    <property type="term" value="P:proton motive force-driven plasma membrane ATP synthesis"/>
    <property type="evidence" value="ECO:0007669"/>
    <property type="project" value="UniProtKB-UniRule"/>
</dbReference>
<dbReference type="CDD" id="cd18111">
    <property type="entry name" value="ATP-synt_V_A-type_alpha_C"/>
    <property type="match status" value="1"/>
</dbReference>
<dbReference type="CDD" id="cd18119">
    <property type="entry name" value="ATP-synt_V_A-type_alpha_N"/>
    <property type="match status" value="1"/>
</dbReference>
<dbReference type="CDD" id="cd01134">
    <property type="entry name" value="V_A-ATPase_A"/>
    <property type="match status" value="1"/>
</dbReference>
<dbReference type="FunFam" id="2.40.30.20:FF:000002">
    <property type="entry name" value="V-type proton ATPase catalytic subunit A"/>
    <property type="match status" value="1"/>
</dbReference>
<dbReference type="FunFam" id="2.40.50.100:FF:000008">
    <property type="entry name" value="V-type proton ATPase catalytic subunit A"/>
    <property type="match status" value="1"/>
</dbReference>
<dbReference type="Gene3D" id="2.40.30.20">
    <property type="match status" value="1"/>
</dbReference>
<dbReference type="Gene3D" id="2.40.50.100">
    <property type="match status" value="1"/>
</dbReference>
<dbReference type="Gene3D" id="1.10.1140.10">
    <property type="entry name" value="Bovine Mitochondrial F1-atpase, Atp Synthase Beta Chain, Chain D, domain 3"/>
    <property type="match status" value="1"/>
</dbReference>
<dbReference type="Gene3D" id="3.40.50.300">
    <property type="entry name" value="P-loop containing nucleotide triphosphate hydrolases"/>
    <property type="match status" value="1"/>
</dbReference>
<dbReference type="HAMAP" id="MF_00309">
    <property type="entry name" value="ATP_synth_A_arch"/>
    <property type="match status" value="1"/>
</dbReference>
<dbReference type="InterPro" id="IPR003593">
    <property type="entry name" value="AAA+_ATPase"/>
</dbReference>
<dbReference type="InterPro" id="IPR055190">
    <property type="entry name" value="ATP-synt_VA_C"/>
</dbReference>
<dbReference type="InterPro" id="IPR031686">
    <property type="entry name" value="ATP-synth_a_Xtn"/>
</dbReference>
<dbReference type="InterPro" id="IPR023366">
    <property type="entry name" value="ATP_synth_asu-like_sf"/>
</dbReference>
<dbReference type="InterPro" id="IPR020003">
    <property type="entry name" value="ATPase_a/bsu_AS"/>
</dbReference>
<dbReference type="InterPro" id="IPR004100">
    <property type="entry name" value="ATPase_F1/V1/A1_a/bsu_N"/>
</dbReference>
<dbReference type="InterPro" id="IPR036121">
    <property type="entry name" value="ATPase_F1/V1/A1_a/bsu_N_sf"/>
</dbReference>
<dbReference type="InterPro" id="IPR000194">
    <property type="entry name" value="ATPase_F1/V1/A1_a/bsu_nucl-bd"/>
</dbReference>
<dbReference type="InterPro" id="IPR024034">
    <property type="entry name" value="ATPase_F1/V1_b/a_C"/>
</dbReference>
<dbReference type="InterPro" id="IPR027417">
    <property type="entry name" value="P-loop_NTPase"/>
</dbReference>
<dbReference type="InterPro" id="IPR022878">
    <property type="entry name" value="V-ATPase_asu"/>
</dbReference>
<dbReference type="NCBIfam" id="NF003220">
    <property type="entry name" value="PRK04192.1"/>
    <property type="match status" value="1"/>
</dbReference>
<dbReference type="PANTHER" id="PTHR43607:SF1">
    <property type="entry name" value="H(+)-TRANSPORTING TWO-SECTOR ATPASE"/>
    <property type="match status" value="1"/>
</dbReference>
<dbReference type="PANTHER" id="PTHR43607">
    <property type="entry name" value="V-TYPE PROTON ATPASE CATALYTIC SUBUNIT A"/>
    <property type="match status" value="1"/>
</dbReference>
<dbReference type="Pfam" id="PF00006">
    <property type="entry name" value="ATP-synt_ab"/>
    <property type="match status" value="1"/>
</dbReference>
<dbReference type="Pfam" id="PF02874">
    <property type="entry name" value="ATP-synt_ab_N"/>
    <property type="match status" value="1"/>
</dbReference>
<dbReference type="Pfam" id="PF16886">
    <property type="entry name" value="ATP-synt_ab_Xtn"/>
    <property type="match status" value="1"/>
</dbReference>
<dbReference type="Pfam" id="PF22919">
    <property type="entry name" value="ATP-synt_VA_C"/>
    <property type="match status" value="1"/>
</dbReference>
<dbReference type="SMART" id="SM00382">
    <property type="entry name" value="AAA"/>
    <property type="match status" value="1"/>
</dbReference>
<dbReference type="SUPFAM" id="SSF47917">
    <property type="entry name" value="C-terminal domain of alpha and beta subunits of F1 ATP synthase"/>
    <property type="match status" value="1"/>
</dbReference>
<dbReference type="SUPFAM" id="SSF50615">
    <property type="entry name" value="N-terminal domain of alpha and beta subunits of F1 ATP synthase"/>
    <property type="match status" value="1"/>
</dbReference>
<dbReference type="SUPFAM" id="SSF52540">
    <property type="entry name" value="P-loop containing nucleoside triphosphate hydrolases"/>
    <property type="match status" value="1"/>
</dbReference>
<dbReference type="PROSITE" id="PS00152">
    <property type="entry name" value="ATPASE_ALPHA_BETA"/>
    <property type="match status" value="1"/>
</dbReference>
<feature type="chain" id="PRO_0000322463" description="V-type ATP synthase alpha chain">
    <location>
        <begin position="1"/>
        <end position="592"/>
    </location>
</feature>
<feature type="binding site" evidence="1">
    <location>
        <begin position="232"/>
        <end position="239"/>
    </location>
    <ligand>
        <name>ATP</name>
        <dbReference type="ChEBI" id="CHEBI:30616"/>
    </ligand>
</feature>
<proteinExistence type="inferred from homology"/>
<name>VATA_CLOD6</name>
<evidence type="ECO:0000255" key="1">
    <source>
        <dbReference type="HAMAP-Rule" id="MF_00309"/>
    </source>
</evidence>
<accession>Q184E7</accession>
<gene>
    <name evidence="1" type="primary">atpA</name>
    <name type="ordered locus">CD630_29560</name>
</gene>
<keyword id="KW-0066">ATP synthesis</keyword>
<keyword id="KW-0067">ATP-binding</keyword>
<keyword id="KW-0375">Hydrogen ion transport</keyword>
<keyword id="KW-0406">Ion transport</keyword>
<keyword id="KW-0547">Nucleotide-binding</keyword>
<keyword id="KW-1185">Reference proteome</keyword>
<keyword id="KW-1278">Translocase</keyword>
<keyword id="KW-0813">Transport</keyword>
<sequence length="592" mass="65526">MKTGTIVKVSGPLVVAEGMRDANMFDVVRVSDKHLIGEIIEMHGDKASIQVYEETSGLGPGEEVVSLGMPMSVELGPGLISTIYDGIQRPLEKMYDISGTNITKGVEVSSLDRTTKWEFKPKKSVGDKVVAGDIIGGVQETAVVECKIMVPYGVKGTIKEIYSGEFTVEDTVCVITDEKGNDIPVTMMQKWPVRKERPYREKKTPDSLLVTGQRVIDTFFPITKGGVAAIPGPFGSGKTVTQHQLAKWADADIVVYIGCGERGNEMTDVLLEFPELKDPRTGESLMQRTVLIANTSDMPVAAREASIYTGITIAEYFRDMGYSVALMADSTSRWAEALREMSGRLEEMPGEEGYPAYLGSRLAQFYERAGKVNCLGMDEREGTLTAIGAVSPPGGDTSEPVSQATLRIVKVFWGLDASLAYKRHFPAINWLTSYSLYQEKVDVWADKNVNDNFSAQRAQAMKLLQVESELQEIVQLVGVDSLSDGDRLILEVTRSIREDFLHQNSFHEVDTYTSLHKQYRMMGLILKFYKSAQDAIKQNVTINDIIKLSVLEKIGRAKYVEEGDIDAAYDSIEDEIDNELADLIKKRGAEEL</sequence>
<protein>
    <recommendedName>
        <fullName evidence="1">V-type ATP synthase alpha chain</fullName>
        <ecNumber evidence="1">7.1.2.2</ecNumber>
    </recommendedName>
    <alternativeName>
        <fullName evidence="1">V-ATPase subunit A</fullName>
    </alternativeName>
</protein>
<organism>
    <name type="scientific">Clostridioides difficile (strain 630)</name>
    <name type="common">Peptoclostridium difficile</name>
    <dbReference type="NCBI Taxonomy" id="272563"/>
    <lineage>
        <taxon>Bacteria</taxon>
        <taxon>Bacillati</taxon>
        <taxon>Bacillota</taxon>
        <taxon>Clostridia</taxon>
        <taxon>Peptostreptococcales</taxon>
        <taxon>Peptostreptococcaceae</taxon>
        <taxon>Clostridioides</taxon>
    </lineage>
</organism>